<name>RS4_BLOPB</name>
<keyword id="KW-1185">Reference proteome</keyword>
<keyword id="KW-0687">Ribonucleoprotein</keyword>
<keyword id="KW-0689">Ribosomal protein</keyword>
<keyword id="KW-0694">RNA-binding</keyword>
<keyword id="KW-0699">rRNA-binding</keyword>
<proteinExistence type="inferred from homology"/>
<dbReference type="EMBL" id="CP000016">
    <property type="protein sequence ID" value="AAZ40855.1"/>
    <property type="molecule type" value="Genomic_DNA"/>
</dbReference>
<dbReference type="RefSeq" id="WP_011282762.1">
    <property type="nucleotide sequence ID" value="NC_007292.1"/>
</dbReference>
<dbReference type="SMR" id="Q493I5"/>
<dbReference type="STRING" id="291272.BPEN_222"/>
<dbReference type="KEGG" id="bpn:BPEN_222"/>
<dbReference type="eggNOG" id="COG0522">
    <property type="taxonomic scope" value="Bacteria"/>
</dbReference>
<dbReference type="HOGENOM" id="CLU_092403_0_2_6"/>
<dbReference type="OrthoDB" id="9803672at2"/>
<dbReference type="Proteomes" id="UP000007794">
    <property type="component" value="Chromosome"/>
</dbReference>
<dbReference type="GO" id="GO:0015935">
    <property type="term" value="C:small ribosomal subunit"/>
    <property type="evidence" value="ECO:0007669"/>
    <property type="project" value="InterPro"/>
</dbReference>
<dbReference type="GO" id="GO:0019843">
    <property type="term" value="F:rRNA binding"/>
    <property type="evidence" value="ECO:0007669"/>
    <property type="project" value="UniProtKB-UniRule"/>
</dbReference>
<dbReference type="GO" id="GO:0003735">
    <property type="term" value="F:structural constituent of ribosome"/>
    <property type="evidence" value="ECO:0007669"/>
    <property type="project" value="InterPro"/>
</dbReference>
<dbReference type="GO" id="GO:0042274">
    <property type="term" value="P:ribosomal small subunit biogenesis"/>
    <property type="evidence" value="ECO:0007669"/>
    <property type="project" value="TreeGrafter"/>
</dbReference>
<dbReference type="GO" id="GO:0006412">
    <property type="term" value="P:translation"/>
    <property type="evidence" value="ECO:0007669"/>
    <property type="project" value="UniProtKB-UniRule"/>
</dbReference>
<dbReference type="CDD" id="cd00165">
    <property type="entry name" value="S4"/>
    <property type="match status" value="1"/>
</dbReference>
<dbReference type="FunFam" id="1.10.1050.10:FF:000001">
    <property type="entry name" value="30S ribosomal protein S4"/>
    <property type="match status" value="1"/>
</dbReference>
<dbReference type="FunFam" id="3.10.290.10:FF:000001">
    <property type="entry name" value="30S ribosomal protein S4"/>
    <property type="match status" value="1"/>
</dbReference>
<dbReference type="Gene3D" id="1.10.1050.10">
    <property type="entry name" value="Ribosomal Protein S4 Delta 41, Chain A, domain 1"/>
    <property type="match status" value="1"/>
</dbReference>
<dbReference type="Gene3D" id="3.10.290.10">
    <property type="entry name" value="RNA-binding S4 domain"/>
    <property type="match status" value="1"/>
</dbReference>
<dbReference type="HAMAP" id="MF_01306_B">
    <property type="entry name" value="Ribosomal_uS4_B"/>
    <property type="match status" value="1"/>
</dbReference>
<dbReference type="InterPro" id="IPR022801">
    <property type="entry name" value="Ribosomal_uS4"/>
</dbReference>
<dbReference type="InterPro" id="IPR005709">
    <property type="entry name" value="Ribosomal_uS4_bac-type"/>
</dbReference>
<dbReference type="InterPro" id="IPR018079">
    <property type="entry name" value="Ribosomal_uS4_CS"/>
</dbReference>
<dbReference type="InterPro" id="IPR001912">
    <property type="entry name" value="Ribosomal_uS4_N"/>
</dbReference>
<dbReference type="InterPro" id="IPR002942">
    <property type="entry name" value="S4_RNA-bd"/>
</dbReference>
<dbReference type="InterPro" id="IPR036986">
    <property type="entry name" value="S4_RNA-bd_sf"/>
</dbReference>
<dbReference type="NCBIfam" id="NF003717">
    <property type="entry name" value="PRK05327.1"/>
    <property type="match status" value="1"/>
</dbReference>
<dbReference type="NCBIfam" id="TIGR01017">
    <property type="entry name" value="rpsD_bact"/>
    <property type="match status" value="1"/>
</dbReference>
<dbReference type="PANTHER" id="PTHR11831">
    <property type="entry name" value="30S 40S RIBOSOMAL PROTEIN"/>
    <property type="match status" value="1"/>
</dbReference>
<dbReference type="PANTHER" id="PTHR11831:SF4">
    <property type="entry name" value="SMALL RIBOSOMAL SUBUNIT PROTEIN US4M"/>
    <property type="match status" value="1"/>
</dbReference>
<dbReference type="Pfam" id="PF00163">
    <property type="entry name" value="Ribosomal_S4"/>
    <property type="match status" value="1"/>
</dbReference>
<dbReference type="Pfam" id="PF01479">
    <property type="entry name" value="S4"/>
    <property type="match status" value="1"/>
</dbReference>
<dbReference type="SMART" id="SM01390">
    <property type="entry name" value="Ribosomal_S4"/>
    <property type="match status" value="1"/>
</dbReference>
<dbReference type="SMART" id="SM00363">
    <property type="entry name" value="S4"/>
    <property type="match status" value="1"/>
</dbReference>
<dbReference type="SUPFAM" id="SSF55174">
    <property type="entry name" value="Alpha-L RNA-binding motif"/>
    <property type="match status" value="1"/>
</dbReference>
<dbReference type="PROSITE" id="PS00632">
    <property type="entry name" value="RIBOSOMAL_S4"/>
    <property type="match status" value="1"/>
</dbReference>
<dbReference type="PROSITE" id="PS50889">
    <property type="entry name" value="S4"/>
    <property type="match status" value="1"/>
</dbReference>
<sequence length="207" mass="24156">MAKYLGPKLKLSRREGTDLFLKSGIRAIDSKCKLDQPPGQHNMRKSRFSDYGIQLREKQKVRRIYGILERQFSNYYKRAARIKGNTGENLLKLLESRLDNTVYRMGFGATRAEARQLVSHKSIMVENRIVNIASYQVVPNTVIKIHKKSHKQSRIRASLELSEQQREKLAWIEVDPIKLQGLFKRYPERSELSANIDEHLIIELYSK</sequence>
<gene>
    <name evidence="1" type="primary">rpsD</name>
    <name type="ordered locus">BPEN_222</name>
</gene>
<evidence type="ECO:0000255" key="1">
    <source>
        <dbReference type="HAMAP-Rule" id="MF_01306"/>
    </source>
</evidence>
<evidence type="ECO:0000305" key="2"/>
<protein>
    <recommendedName>
        <fullName evidence="1">Small ribosomal subunit protein uS4</fullName>
    </recommendedName>
    <alternativeName>
        <fullName evidence="2">30S ribosomal protein S4</fullName>
    </alternativeName>
</protein>
<comment type="function">
    <text evidence="1">One of the primary rRNA binding proteins, it binds directly to 16S rRNA where it nucleates assembly of the body of the 30S subunit.</text>
</comment>
<comment type="function">
    <text evidence="1">With S5 and S12 plays an important role in translational accuracy.</text>
</comment>
<comment type="subunit">
    <text evidence="1">Part of the 30S ribosomal subunit. Contacts protein S5. The interaction surface between S4 and S5 is involved in control of translational fidelity.</text>
</comment>
<comment type="similarity">
    <text evidence="1">Belongs to the universal ribosomal protein uS4 family.</text>
</comment>
<reference key="1">
    <citation type="journal article" date="2005" name="Genome Res.">
        <title>Genome sequence of Blochmannia pennsylvanicus indicates parallel evolutionary trends among bacterial mutualists of insects.</title>
        <authorList>
            <person name="Degnan P.H."/>
            <person name="Lazarus A.B."/>
            <person name="Wernegreen J.J."/>
        </authorList>
    </citation>
    <scope>NUCLEOTIDE SEQUENCE [LARGE SCALE GENOMIC DNA]</scope>
    <source>
        <strain>BPEN</strain>
    </source>
</reference>
<feature type="chain" id="PRO_0000228878" description="Small ribosomal subunit protein uS4">
    <location>
        <begin position="1"/>
        <end position="207"/>
    </location>
</feature>
<feature type="domain" description="S4 RNA-binding" evidence="1">
    <location>
        <begin position="96"/>
        <end position="156"/>
    </location>
</feature>
<accession>Q493I5</accession>
<organism>
    <name type="scientific">Blochmanniella pennsylvanica (strain BPEN)</name>
    <dbReference type="NCBI Taxonomy" id="291272"/>
    <lineage>
        <taxon>Bacteria</taxon>
        <taxon>Pseudomonadati</taxon>
        <taxon>Pseudomonadota</taxon>
        <taxon>Gammaproteobacteria</taxon>
        <taxon>Enterobacterales</taxon>
        <taxon>Enterobacteriaceae</taxon>
        <taxon>ant endosymbionts</taxon>
        <taxon>Candidatus Blochmanniella</taxon>
    </lineage>
</organism>